<reference key="1">
    <citation type="submission" date="2006-12" db="EMBL/GenBank/DDBJ databases">
        <title>Complete sequence of Shewanella amazonensis SB2B.</title>
        <authorList>
            <consortium name="US DOE Joint Genome Institute"/>
            <person name="Copeland A."/>
            <person name="Lucas S."/>
            <person name="Lapidus A."/>
            <person name="Barry K."/>
            <person name="Detter J.C."/>
            <person name="Glavina del Rio T."/>
            <person name="Hammon N."/>
            <person name="Israni S."/>
            <person name="Dalin E."/>
            <person name="Tice H."/>
            <person name="Pitluck S."/>
            <person name="Munk A.C."/>
            <person name="Brettin T."/>
            <person name="Bruce D."/>
            <person name="Han C."/>
            <person name="Tapia R."/>
            <person name="Gilna P."/>
            <person name="Schmutz J."/>
            <person name="Larimer F."/>
            <person name="Land M."/>
            <person name="Hauser L."/>
            <person name="Kyrpides N."/>
            <person name="Mikhailova N."/>
            <person name="Fredrickson J."/>
            <person name="Richardson P."/>
        </authorList>
    </citation>
    <scope>NUCLEOTIDE SEQUENCE [LARGE SCALE GENOMIC DNA]</scope>
    <source>
        <strain>ATCC BAA-1098 / SB2B</strain>
    </source>
</reference>
<gene>
    <name evidence="1" type="primary">fluC</name>
    <name evidence="1" type="synonym">crcB</name>
    <name type="ordered locus">Sama_1775</name>
</gene>
<organism>
    <name type="scientific">Shewanella amazonensis (strain ATCC BAA-1098 / SB2B)</name>
    <dbReference type="NCBI Taxonomy" id="326297"/>
    <lineage>
        <taxon>Bacteria</taxon>
        <taxon>Pseudomonadati</taxon>
        <taxon>Pseudomonadota</taxon>
        <taxon>Gammaproteobacteria</taxon>
        <taxon>Alteromonadales</taxon>
        <taxon>Shewanellaceae</taxon>
        <taxon>Shewanella</taxon>
    </lineage>
</organism>
<evidence type="ECO:0000255" key="1">
    <source>
        <dbReference type="HAMAP-Rule" id="MF_00454"/>
    </source>
</evidence>
<accession>A1S6H4</accession>
<keyword id="KW-0997">Cell inner membrane</keyword>
<keyword id="KW-1003">Cell membrane</keyword>
<keyword id="KW-0407">Ion channel</keyword>
<keyword id="KW-0406">Ion transport</keyword>
<keyword id="KW-0472">Membrane</keyword>
<keyword id="KW-0479">Metal-binding</keyword>
<keyword id="KW-1185">Reference proteome</keyword>
<keyword id="KW-0915">Sodium</keyword>
<keyword id="KW-0812">Transmembrane</keyword>
<keyword id="KW-1133">Transmembrane helix</keyword>
<keyword id="KW-0813">Transport</keyword>
<protein>
    <recommendedName>
        <fullName evidence="1">Fluoride-specific ion channel FluC</fullName>
    </recommendedName>
</protein>
<dbReference type="EMBL" id="CP000507">
    <property type="protein sequence ID" value="ABL99980.1"/>
    <property type="molecule type" value="Genomic_DNA"/>
</dbReference>
<dbReference type="RefSeq" id="WP_011759888.1">
    <property type="nucleotide sequence ID" value="NC_008700.1"/>
</dbReference>
<dbReference type="SMR" id="A1S6H4"/>
<dbReference type="STRING" id="326297.Sama_1775"/>
<dbReference type="KEGG" id="saz:Sama_1775"/>
<dbReference type="eggNOG" id="COG0239">
    <property type="taxonomic scope" value="Bacteria"/>
</dbReference>
<dbReference type="HOGENOM" id="CLU_114342_3_0_6"/>
<dbReference type="OrthoDB" id="9806299at2"/>
<dbReference type="Proteomes" id="UP000009175">
    <property type="component" value="Chromosome"/>
</dbReference>
<dbReference type="GO" id="GO:0005886">
    <property type="term" value="C:plasma membrane"/>
    <property type="evidence" value="ECO:0007669"/>
    <property type="project" value="UniProtKB-SubCell"/>
</dbReference>
<dbReference type="GO" id="GO:0062054">
    <property type="term" value="F:fluoride channel activity"/>
    <property type="evidence" value="ECO:0007669"/>
    <property type="project" value="UniProtKB-UniRule"/>
</dbReference>
<dbReference type="GO" id="GO:0046872">
    <property type="term" value="F:metal ion binding"/>
    <property type="evidence" value="ECO:0007669"/>
    <property type="project" value="UniProtKB-KW"/>
</dbReference>
<dbReference type="GO" id="GO:0140114">
    <property type="term" value="P:cellular detoxification of fluoride"/>
    <property type="evidence" value="ECO:0007669"/>
    <property type="project" value="UniProtKB-UniRule"/>
</dbReference>
<dbReference type="HAMAP" id="MF_00454">
    <property type="entry name" value="FluC"/>
    <property type="match status" value="1"/>
</dbReference>
<dbReference type="InterPro" id="IPR003691">
    <property type="entry name" value="FluC"/>
</dbReference>
<dbReference type="NCBIfam" id="TIGR00494">
    <property type="entry name" value="crcB"/>
    <property type="match status" value="1"/>
</dbReference>
<dbReference type="PANTHER" id="PTHR28259">
    <property type="entry name" value="FLUORIDE EXPORT PROTEIN 1-RELATED"/>
    <property type="match status" value="1"/>
</dbReference>
<dbReference type="PANTHER" id="PTHR28259:SF1">
    <property type="entry name" value="FLUORIDE EXPORT PROTEIN 1-RELATED"/>
    <property type="match status" value="1"/>
</dbReference>
<dbReference type="Pfam" id="PF02537">
    <property type="entry name" value="CRCB"/>
    <property type="match status" value="1"/>
</dbReference>
<sequence length="124" mass="13164">MNNVLYIAAGGAIGAVLRYSISILALQLFGTGFPFGTLIVNVAGSFLMGCIYALAELSHIGPEWKALIGVGLLGALTTFSTFSNETLLLLQQGELVKASLNVLLNLILCLTVVYLGQQLIYSRV</sequence>
<feature type="chain" id="PRO_1000026412" description="Fluoride-specific ion channel FluC">
    <location>
        <begin position="1"/>
        <end position="124"/>
    </location>
</feature>
<feature type="transmembrane region" description="Helical" evidence="1">
    <location>
        <begin position="4"/>
        <end position="24"/>
    </location>
</feature>
<feature type="transmembrane region" description="Helical" evidence="1">
    <location>
        <begin position="35"/>
        <end position="55"/>
    </location>
</feature>
<feature type="transmembrane region" description="Helical" evidence="1">
    <location>
        <begin position="60"/>
        <end position="80"/>
    </location>
</feature>
<feature type="transmembrane region" description="Helical" evidence="1">
    <location>
        <begin position="100"/>
        <end position="120"/>
    </location>
</feature>
<feature type="binding site" evidence="1">
    <location>
        <position position="74"/>
    </location>
    <ligand>
        <name>Na(+)</name>
        <dbReference type="ChEBI" id="CHEBI:29101"/>
        <note>structural</note>
    </ligand>
</feature>
<feature type="binding site" evidence="1">
    <location>
        <position position="77"/>
    </location>
    <ligand>
        <name>Na(+)</name>
        <dbReference type="ChEBI" id="CHEBI:29101"/>
        <note>structural</note>
    </ligand>
</feature>
<name>FLUC_SHEAM</name>
<comment type="function">
    <text evidence="1">Fluoride-specific ion channel. Important for reducing fluoride concentration in the cell, thus reducing its toxicity.</text>
</comment>
<comment type="catalytic activity">
    <reaction evidence="1">
        <text>fluoride(in) = fluoride(out)</text>
        <dbReference type="Rhea" id="RHEA:76159"/>
        <dbReference type="ChEBI" id="CHEBI:17051"/>
    </reaction>
    <physiologicalReaction direction="left-to-right" evidence="1">
        <dbReference type="Rhea" id="RHEA:76160"/>
    </physiologicalReaction>
</comment>
<comment type="activity regulation">
    <text evidence="1">Na(+) is not transported, but it plays an essential structural role and its presence is essential for fluoride channel function.</text>
</comment>
<comment type="subcellular location">
    <subcellularLocation>
        <location evidence="1">Cell inner membrane</location>
        <topology evidence="1">Multi-pass membrane protein</topology>
    </subcellularLocation>
</comment>
<comment type="similarity">
    <text evidence="1">Belongs to the fluoride channel Fluc/FEX (TC 1.A.43) family.</text>
</comment>
<proteinExistence type="inferred from homology"/>